<sequence length="158" mass="17617">HLFWFFGHPEVYILILPGFGMISHIVAYYAGKKEPFGYMGMVWAMMAIGLLGFIVWAHHMFTVGMDVDTRAYFTSATMIIAIPTGVKVFSWLATLHGGSIKWDTPLLWALGFIFLFTVGGLTGIVLANSSLDIVLHDTYYVVAHFHYVLSMGAVFAIM</sequence>
<feature type="chain" id="PRO_0000183399" description="Cytochrome c oxidase subunit 1">
    <location>
        <begin position="1" status="less than"/>
        <end position="158" status="greater than"/>
    </location>
</feature>
<feature type="transmembrane region" description="Helical; Name=VI" evidence="2">
    <location>
        <begin position="1" status="less than"/>
        <end position="29"/>
    </location>
</feature>
<feature type="topological domain" description="Mitochondrial matrix" evidence="2">
    <location>
        <begin position="30"/>
        <end position="37"/>
    </location>
</feature>
<feature type="transmembrane region" description="Helical; Name=VII" evidence="2">
    <location>
        <begin position="38"/>
        <end position="54"/>
    </location>
</feature>
<feature type="topological domain" description="Mitochondrial intermembrane" evidence="2">
    <location>
        <begin position="55"/>
        <end position="66"/>
    </location>
</feature>
<feature type="transmembrane region" description="Helical; Name=VIII" evidence="2">
    <location>
        <begin position="67"/>
        <end position="95"/>
    </location>
</feature>
<feature type="topological domain" description="Mitochondrial matrix" evidence="2">
    <location>
        <begin position="96"/>
        <end position="103"/>
    </location>
</feature>
<feature type="transmembrane region" description="Helical; Name=IX" evidence="2">
    <location>
        <begin position="104"/>
        <end position="125"/>
    </location>
</feature>
<feature type="topological domain" description="Mitochondrial intermembrane" evidence="2">
    <location>
        <begin position="126"/>
        <end position="138"/>
    </location>
</feature>
<feature type="transmembrane region" description="Helical; Name=X" evidence="2">
    <location>
        <begin position="139"/>
        <end position="158" status="greater than"/>
    </location>
</feature>
<feature type="binding site" evidence="2">
    <location>
        <position position="8"/>
    </location>
    <ligand>
        <name>Cu cation</name>
        <dbReference type="ChEBI" id="CHEBI:23378"/>
        <label>B</label>
    </ligand>
</feature>
<feature type="binding site" evidence="2">
    <location>
        <position position="12"/>
    </location>
    <ligand>
        <name>O2</name>
        <dbReference type="ChEBI" id="CHEBI:15379"/>
    </ligand>
</feature>
<feature type="binding site" evidence="2">
    <location>
        <position position="58"/>
    </location>
    <ligand>
        <name>Cu cation</name>
        <dbReference type="ChEBI" id="CHEBI:23378"/>
        <label>B</label>
    </ligand>
</feature>
<feature type="binding site" evidence="2">
    <location>
        <position position="59"/>
    </location>
    <ligand>
        <name>Cu cation</name>
        <dbReference type="ChEBI" id="CHEBI:23378"/>
        <label>B</label>
    </ligand>
</feature>
<feature type="binding site" evidence="2">
    <location>
        <position position="136"/>
    </location>
    <ligand>
        <name>Mg(2+)</name>
        <dbReference type="ChEBI" id="CHEBI:18420"/>
        <note>ligand shared with MT-CO2</note>
    </ligand>
</feature>
<feature type="binding site" evidence="2">
    <location>
        <position position="137"/>
    </location>
    <ligand>
        <name>Mg(2+)</name>
        <dbReference type="ChEBI" id="CHEBI:18420"/>
        <note>ligand shared with MT-CO2</note>
    </ligand>
</feature>
<feature type="binding site" description="axial binding residue" evidence="2">
    <location>
        <position position="144"/>
    </location>
    <ligand>
        <name>heme a3</name>
        <dbReference type="ChEBI" id="CHEBI:83282"/>
        <note>high-spin</note>
    </ligand>
    <ligandPart>
        <name>Fe</name>
        <dbReference type="ChEBI" id="CHEBI:18248"/>
    </ligandPart>
</feature>
<feature type="binding site" description="axial binding residue" evidence="2">
    <location>
        <position position="146"/>
    </location>
    <ligand>
        <name>Fe(II)-heme a</name>
        <dbReference type="ChEBI" id="CHEBI:61715"/>
        <note>low-spin</note>
    </ligand>
    <ligandPart>
        <name>Fe</name>
        <dbReference type="ChEBI" id="CHEBI:18248"/>
    </ligandPart>
</feature>
<feature type="cross-link" description="1'-histidyl-3'-tyrosine (His-Tyr)" evidence="2">
    <location>
        <begin position="8"/>
        <end position="12"/>
    </location>
</feature>
<feature type="non-terminal residue">
    <location>
        <position position="1"/>
    </location>
</feature>
<feature type="non-terminal residue">
    <location>
        <position position="158"/>
    </location>
</feature>
<proteinExistence type="inferred from homology"/>
<accession>P29650</accession>
<evidence type="ECO:0000250" key="1">
    <source>
        <dbReference type="UniProtKB" id="P00395"/>
    </source>
</evidence>
<evidence type="ECO:0000250" key="2">
    <source>
        <dbReference type="UniProtKB" id="P00396"/>
    </source>
</evidence>
<evidence type="ECO:0000250" key="3">
    <source>
        <dbReference type="UniProtKB" id="P00401"/>
    </source>
</evidence>
<evidence type="ECO:0000305" key="4"/>
<dbReference type="EC" id="7.1.1.9"/>
<dbReference type="EMBL" id="M64908">
    <property type="protein sequence ID" value="AAB01472.1"/>
    <property type="molecule type" value="Genomic_DNA"/>
</dbReference>
<dbReference type="SMR" id="P29650"/>
<dbReference type="UniPathway" id="UPA00705"/>
<dbReference type="GO" id="GO:0005743">
    <property type="term" value="C:mitochondrial inner membrane"/>
    <property type="evidence" value="ECO:0007669"/>
    <property type="project" value="UniProtKB-SubCell"/>
</dbReference>
<dbReference type="GO" id="GO:0045277">
    <property type="term" value="C:respiratory chain complex IV"/>
    <property type="evidence" value="ECO:0000250"/>
    <property type="project" value="UniProtKB"/>
</dbReference>
<dbReference type="GO" id="GO:0004129">
    <property type="term" value="F:cytochrome-c oxidase activity"/>
    <property type="evidence" value="ECO:0007669"/>
    <property type="project" value="UniProtKB-EC"/>
</dbReference>
<dbReference type="GO" id="GO:0020037">
    <property type="term" value="F:heme binding"/>
    <property type="evidence" value="ECO:0007669"/>
    <property type="project" value="InterPro"/>
</dbReference>
<dbReference type="GO" id="GO:0046872">
    <property type="term" value="F:metal ion binding"/>
    <property type="evidence" value="ECO:0007669"/>
    <property type="project" value="UniProtKB-KW"/>
</dbReference>
<dbReference type="GO" id="GO:0015990">
    <property type="term" value="P:electron transport coupled proton transport"/>
    <property type="evidence" value="ECO:0007669"/>
    <property type="project" value="TreeGrafter"/>
</dbReference>
<dbReference type="GO" id="GO:0006123">
    <property type="term" value="P:mitochondrial electron transport, cytochrome c to oxygen"/>
    <property type="evidence" value="ECO:0007669"/>
    <property type="project" value="TreeGrafter"/>
</dbReference>
<dbReference type="FunFam" id="1.20.210.10:FF:000009">
    <property type="entry name" value="Cytochrome c oxidase subunit 1"/>
    <property type="match status" value="1"/>
</dbReference>
<dbReference type="Gene3D" id="1.20.210.10">
    <property type="entry name" value="Cytochrome c oxidase-like, subunit I domain"/>
    <property type="match status" value="1"/>
</dbReference>
<dbReference type="InterPro" id="IPR023616">
    <property type="entry name" value="Cyt_c_oxase-like_su1_dom"/>
</dbReference>
<dbReference type="InterPro" id="IPR036927">
    <property type="entry name" value="Cyt_c_oxase-like_su1_sf"/>
</dbReference>
<dbReference type="InterPro" id="IPR000883">
    <property type="entry name" value="Cyt_C_Oxase_1"/>
</dbReference>
<dbReference type="InterPro" id="IPR023615">
    <property type="entry name" value="Cyt_c_Oxase_su1_BS"/>
</dbReference>
<dbReference type="PANTHER" id="PTHR10422">
    <property type="entry name" value="CYTOCHROME C OXIDASE SUBUNIT 1"/>
    <property type="match status" value="1"/>
</dbReference>
<dbReference type="PANTHER" id="PTHR10422:SF18">
    <property type="entry name" value="CYTOCHROME C OXIDASE SUBUNIT 1"/>
    <property type="match status" value="1"/>
</dbReference>
<dbReference type="Pfam" id="PF00115">
    <property type="entry name" value="COX1"/>
    <property type="match status" value="1"/>
</dbReference>
<dbReference type="PRINTS" id="PR01165">
    <property type="entry name" value="CYCOXIDASEI"/>
</dbReference>
<dbReference type="SUPFAM" id="SSF81442">
    <property type="entry name" value="Cytochrome c oxidase subunit I-like"/>
    <property type="match status" value="1"/>
</dbReference>
<dbReference type="PROSITE" id="PS50855">
    <property type="entry name" value="COX1"/>
    <property type="match status" value="1"/>
</dbReference>
<dbReference type="PROSITE" id="PS00077">
    <property type="entry name" value="COX1_CUB"/>
    <property type="match status" value="1"/>
</dbReference>
<name>COX1_POLSP</name>
<reference key="1">
    <citation type="journal article" date="1991" name="Mol. Biol. Evol.">
        <title>Phylogenetic relationships of neopterygian fishes, inferred from mitochondrial DNA sequences.</title>
        <authorList>
            <person name="Normark B.B."/>
            <person name="McCune A.R."/>
            <person name="Harrison R.G."/>
        </authorList>
    </citation>
    <scope>NUCLEOTIDE SEQUENCE [GENOMIC DNA]</scope>
</reference>
<protein>
    <recommendedName>
        <fullName>Cytochrome c oxidase subunit 1</fullName>
        <ecNumber>7.1.1.9</ecNumber>
    </recommendedName>
    <alternativeName>
        <fullName>Cytochrome c oxidase polypeptide I</fullName>
    </alternativeName>
</protein>
<comment type="function">
    <text evidence="3">Component of the cytochrome c oxidase, the last enzyme in the mitochondrial electron transport chain which drives oxidative phosphorylation. The respiratory chain contains 3 multisubunit complexes succinate dehydrogenase (complex II, CII), ubiquinol-cytochrome c oxidoreductase (cytochrome b-c1 complex, complex III, CIII) and cytochrome c oxidase (complex IV, CIV), that cooperate to transfer electrons derived from NADH and succinate to molecular oxygen, creating an electrochemical gradient over the inner membrane that drives transmembrane transport and the ATP synthase. Cytochrome c oxidase is the component of the respiratory chain that catalyzes the reduction of oxygen to water. Electrons originating from reduced cytochrome c in the intermembrane space (IMS) are transferred via the dinuclear copper A center (CU(A)) of subunit 2 and heme A of subunit 1 to the active site in subunit 1, a binuclear center (BNC) formed by heme A3 and copper B (CU(B)). The BNC reduces molecular oxygen to 2 water molecules using 4 electrons from cytochrome c in the IMS and 4 protons from the mitochondrial matrix.</text>
</comment>
<comment type="catalytic activity">
    <reaction evidence="3">
        <text>4 Fe(II)-[cytochrome c] + O2 + 8 H(+)(in) = 4 Fe(III)-[cytochrome c] + 2 H2O + 4 H(+)(out)</text>
        <dbReference type="Rhea" id="RHEA:11436"/>
        <dbReference type="Rhea" id="RHEA-COMP:10350"/>
        <dbReference type="Rhea" id="RHEA-COMP:14399"/>
        <dbReference type="ChEBI" id="CHEBI:15377"/>
        <dbReference type="ChEBI" id="CHEBI:15378"/>
        <dbReference type="ChEBI" id="CHEBI:15379"/>
        <dbReference type="ChEBI" id="CHEBI:29033"/>
        <dbReference type="ChEBI" id="CHEBI:29034"/>
        <dbReference type="EC" id="7.1.1.9"/>
    </reaction>
    <physiologicalReaction direction="left-to-right" evidence="3">
        <dbReference type="Rhea" id="RHEA:11437"/>
    </physiologicalReaction>
</comment>
<comment type="cofactor">
    <cofactor evidence="2">
        <name>heme</name>
        <dbReference type="ChEBI" id="CHEBI:30413"/>
    </cofactor>
    <text evidence="2">Binds 2 heme A groups non-covalently per subunit.</text>
</comment>
<comment type="cofactor">
    <cofactor evidence="2">
        <name>Cu cation</name>
        <dbReference type="ChEBI" id="CHEBI:23378"/>
    </cofactor>
    <text evidence="2">Binds a copper B center.</text>
</comment>
<comment type="pathway">
    <text evidence="3">Energy metabolism; oxidative phosphorylation.</text>
</comment>
<comment type="subunit">
    <text evidence="1 2">Component of the cytochrome c oxidase (complex IV, CIV), a multisubunit enzyme composed of 14 subunits. The complex is composed of a catalytic core of 3 subunits MT-CO1, MT-CO2 and MT-CO3, encoded in the mitochondrial DNA, and 11 supernumerary subunits COX4I, COX5A, COX5B, COX6A, COX6B, COX6C, COX7A, COX7B, COX7C, COX8 and NDUFA4, which are encoded in the nuclear genome. The complex exists as a monomer or a dimer and forms supercomplexes (SCs) in the inner mitochondrial membrane with NADH-ubiquinone oxidoreductase (complex I, CI) and ubiquinol-cytochrome c oxidoreductase (cytochrome b-c1 complex, complex III, CIII), resulting in different assemblies (supercomplex SCI(1)III(2)IV(1) and megacomplex MCI(2)III(2)IV(2)) (By similarity). As a newly synthesized protein, rapidly incorporates into a multi-subunit assembly intermediate in the inner membrane, called MITRAC (mitochondrial translation regulation assembly intermediate of cytochrome c oxidase) complex, whose core components are COA3/MITRAC12 and COX14. Within the MITRAC complex, interacts with COA3 and with SMIM20/MITRAC7; the interaction with SMIM20 stabilizes the newly synthesized MT-CO1 and prevents its premature turnover. Interacts with TMEM177 in a COX20-dependent manner (By similarity).</text>
</comment>
<comment type="subcellular location">
    <subcellularLocation>
        <location evidence="2">Mitochondrion inner membrane</location>
        <topology evidence="2">Multi-pass membrane protein</topology>
    </subcellularLocation>
</comment>
<comment type="similarity">
    <text evidence="4">Belongs to the heme-copper respiratory oxidase family.</text>
</comment>
<organism>
    <name type="scientific">Polyodon spathula</name>
    <name type="common">North American paddlefish</name>
    <name type="synonym">Squalus spathula</name>
    <dbReference type="NCBI Taxonomy" id="7913"/>
    <lineage>
        <taxon>Eukaryota</taxon>
        <taxon>Metazoa</taxon>
        <taxon>Chordata</taxon>
        <taxon>Craniata</taxon>
        <taxon>Vertebrata</taxon>
        <taxon>Euteleostomi</taxon>
        <taxon>Actinopterygii</taxon>
        <taxon>Chondrostei</taxon>
        <taxon>Acipenseriformes</taxon>
        <taxon>Polyodontidae</taxon>
        <taxon>Polyodon</taxon>
    </lineage>
</organism>
<gene>
    <name type="primary">mt-co1</name>
    <name type="synonym">coi</name>
    <name type="synonym">coxi</name>
    <name type="synonym">mtco1</name>
</gene>
<geneLocation type="mitochondrion"/>
<keyword id="KW-0186">Copper</keyword>
<keyword id="KW-0249">Electron transport</keyword>
<keyword id="KW-0349">Heme</keyword>
<keyword id="KW-0408">Iron</keyword>
<keyword id="KW-0460">Magnesium</keyword>
<keyword id="KW-0472">Membrane</keyword>
<keyword id="KW-0479">Metal-binding</keyword>
<keyword id="KW-0496">Mitochondrion</keyword>
<keyword id="KW-0999">Mitochondrion inner membrane</keyword>
<keyword id="KW-0679">Respiratory chain</keyword>
<keyword id="KW-0915">Sodium</keyword>
<keyword id="KW-1278">Translocase</keyword>
<keyword id="KW-0812">Transmembrane</keyword>
<keyword id="KW-1133">Transmembrane helix</keyword>
<keyword id="KW-0813">Transport</keyword>